<proteinExistence type="inferred from homology"/>
<comment type="function">
    <text evidence="1">Catalyzes the ATP-dependent amination of UTP to CTP with either L-glutamine or ammonia as the source of nitrogen. Regulates intracellular CTP levels through interactions with the four ribonucleotide triphosphates.</text>
</comment>
<comment type="catalytic activity">
    <reaction evidence="1">
        <text>UTP + L-glutamine + ATP + H2O = CTP + L-glutamate + ADP + phosphate + 2 H(+)</text>
        <dbReference type="Rhea" id="RHEA:26426"/>
        <dbReference type="ChEBI" id="CHEBI:15377"/>
        <dbReference type="ChEBI" id="CHEBI:15378"/>
        <dbReference type="ChEBI" id="CHEBI:29985"/>
        <dbReference type="ChEBI" id="CHEBI:30616"/>
        <dbReference type="ChEBI" id="CHEBI:37563"/>
        <dbReference type="ChEBI" id="CHEBI:43474"/>
        <dbReference type="ChEBI" id="CHEBI:46398"/>
        <dbReference type="ChEBI" id="CHEBI:58359"/>
        <dbReference type="ChEBI" id="CHEBI:456216"/>
        <dbReference type="EC" id="6.3.4.2"/>
    </reaction>
</comment>
<comment type="catalytic activity">
    <reaction evidence="1">
        <text>L-glutamine + H2O = L-glutamate + NH4(+)</text>
        <dbReference type="Rhea" id="RHEA:15889"/>
        <dbReference type="ChEBI" id="CHEBI:15377"/>
        <dbReference type="ChEBI" id="CHEBI:28938"/>
        <dbReference type="ChEBI" id="CHEBI:29985"/>
        <dbReference type="ChEBI" id="CHEBI:58359"/>
    </reaction>
</comment>
<comment type="catalytic activity">
    <reaction evidence="1">
        <text>UTP + NH4(+) + ATP = CTP + ADP + phosphate + 2 H(+)</text>
        <dbReference type="Rhea" id="RHEA:16597"/>
        <dbReference type="ChEBI" id="CHEBI:15378"/>
        <dbReference type="ChEBI" id="CHEBI:28938"/>
        <dbReference type="ChEBI" id="CHEBI:30616"/>
        <dbReference type="ChEBI" id="CHEBI:37563"/>
        <dbReference type="ChEBI" id="CHEBI:43474"/>
        <dbReference type="ChEBI" id="CHEBI:46398"/>
        <dbReference type="ChEBI" id="CHEBI:456216"/>
    </reaction>
</comment>
<comment type="activity regulation">
    <text evidence="1">Allosterically activated by GTP, when glutamine is the substrate; GTP has no effect on the reaction when ammonia is the substrate. The allosteric effector GTP functions by stabilizing the protein conformation that binds the tetrahedral intermediate(s) formed during glutamine hydrolysis. Inhibited by the product CTP, via allosteric rather than competitive inhibition.</text>
</comment>
<comment type="pathway">
    <text evidence="1">Pyrimidine metabolism; CTP biosynthesis via de novo pathway; CTP from UDP: step 2/2.</text>
</comment>
<comment type="subunit">
    <text evidence="1">Homotetramer.</text>
</comment>
<comment type="miscellaneous">
    <text evidence="1">CTPSs have evolved a hybrid strategy for distinguishing between UTP and CTP. The overlapping regions of the product feedback inhibitory and substrate sites recognize a common feature in both compounds, the triphosphate moiety. To differentiate isosteric substrate and product pyrimidine rings, an additional pocket far from the expected kinase/ligase catalytic site, specifically recognizes the cytosine and ribose portions of the product inhibitor.</text>
</comment>
<comment type="similarity">
    <text evidence="1">Belongs to the CTP synthase family.</text>
</comment>
<feature type="chain" id="PRO_0000266084" description="CTP synthase">
    <location>
        <begin position="1"/>
        <end position="553"/>
    </location>
</feature>
<feature type="domain" description="Glutamine amidotransferase type-1" evidence="1">
    <location>
        <begin position="295"/>
        <end position="547"/>
    </location>
</feature>
<feature type="region of interest" description="Amidoligase domain" evidence="1">
    <location>
        <begin position="1"/>
        <end position="270"/>
    </location>
</feature>
<feature type="active site" description="Nucleophile; for glutamine hydrolysis" evidence="1">
    <location>
        <position position="383"/>
    </location>
</feature>
<feature type="active site" evidence="1">
    <location>
        <position position="520"/>
    </location>
</feature>
<feature type="active site" evidence="1">
    <location>
        <position position="522"/>
    </location>
</feature>
<feature type="binding site" evidence="1">
    <location>
        <position position="13"/>
    </location>
    <ligand>
        <name>CTP</name>
        <dbReference type="ChEBI" id="CHEBI:37563"/>
        <note>allosteric inhibitor</note>
    </ligand>
</feature>
<feature type="binding site" evidence="1">
    <location>
        <position position="13"/>
    </location>
    <ligand>
        <name>UTP</name>
        <dbReference type="ChEBI" id="CHEBI:46398"/>
    </ligand>
</feature>
<feature type="binding site" evidence="1">
    <location>
        <begin position="14"/>
        <end position="19"/>
    </location>
    <ligand>
        <name>ATP</name>
        <dbReference type="ChEBI" id="CHEBI:30616"/>
    </ligand>
</feature>
<feature type="binding site" evidence="1">
    <location>
        <position position="71"/>
    </location>
    <ligand>
        <name>ATP</name>
        <dbReference type="ChEBI" id="CHEBI:30616"/>
    </ligand>
</feature>
<feature type="binding site" evidence="1">
    <location>
        <position position="71"/>
    </location>
    <ligand>
        <name>Mg(2+)</name>
        <dbReference type="ChEBI" id="CHEBI:18420"/>
    </ligand>
</feature>
<feature type="binding site" evidence="1">
    <location>
        <position position="144"/>
    </location>
    <ligand>
        <name>Mg(2+)</name>
        <dbReference type="ChEBI" id="CHEBI:18420"/>
    </ligand>
</feature>
<feature type="binding site" evidence="1">
    <location>
        <begin position="151"/>
        <end position="153"/>
    </location>
    <ligand>
        <name>CTP</name>
        <dbReference type="ChEBI" id="CHEBI:37563"/>
        <note>allosteric inhibitor</note>
    </ligand>
</feature>
<feature type="binding site" evidence="1">
    <location>
        <begin position="191"/>
        <end position="196"/>
    </location>
    <ligand>
        <name>CTP</name>
        <dbReference type="ChEBI" id="CHEBI:37563"/>
        <note>allosteric inhibitor</note>
    </ligand>
</feature>
<feature type="binding site" evidence="1">
    <location>
        <begin position="191"/>
        <end position="196"/>
    </location>
    <ligand>
        <name>UTP</name>
        <dbReference type="ChEBI" id="CHEBI:46398"/>
    </ligand>
</feature>
<feature type="binding site" evidence="1">
    <location>
        <position position="227"/>
    </location>
    <ligand>
        <name>CTP</name>
        <dbReference type="ChEBI" id="CHEBI:37563"/>
        <note>allosteric inhibitor</note>
    </ligand>
</feature>
<feature type="binding site" evidence="1">
    <location>
        <position position="227"/>
    </location>
    <ligand>
        <name>UTP</name>
        <dbReference type="ChEBI" id="CHEBI:46398"/>
    </ligand>
</feature>
<feature type="binding site" evidence="1">
    <location>
        <position position="356"/>
    </location>
    <ligand>
        <name>L-glutamine</name>
        <dbReference type="ChEBI" id="CHEBI:58359"/>
    </ligand>
</feature>
<feature type="binding site" evidence="1">
    <location>
        <begin position="384"/>
        <end position="387"/>
    </location>
    <ligand>
        <name>L-glutamine</name>
        <dbReference type="ChEBI" id="CHEBI:58359"/>
    </ligand>
</feature>
<feature type="binding site" evidence="1">
    <location>
        <position position="407"/>
    </location>
    <ligand>
        <name>L-glutamine</name>
        <dbReference type="ChEBI" id="CHEBI:58359"/>
    </ligand>
</feature>
<feature type="binding site" evidence="1">
    <location>
        <position position="473"/>
    </location>
    <ligand>
        <name>L-glutamine</name>
        <dbReference type="ChEBI" id="CHEBI:58359"/>
    </ligand>
</feature>
<evidence type="ECO:0000255" key="1">
    <source>
        <dbReference type="HAMAP-Rule" id="MF_01227"/>
    </source>
</evidence>
<gene>
    <name evidence="1" type="primary">pyrG</name>
    <name type="ordered locus">BURPS1710b_2713</name>
</gene>
<reference key="1">
    <citation type="journal article" date="2010" name="Genome Biol. Evol.">
        <title>Continuing evolution of Burkholderia mallei through genome reduction and large-scale rearrangements.</title>
        <authorList>
            <person name="Losada L."/>
            <person name="Ronning C.M."/>
            <person name="DeShazer D."/>
            <person name="Woods D."/>
            <person name="Fedorova N."/>
            <person name="Kim H.S."/>
            <person name="Shabalina S.A."/>
            <person name="Pearson T.R."/>
            <person name="Brinkac L."/>
            <person name="Tan P."/>
            <person name="Nandi T."/>
            <person name="Crabtree J."/>
            <person name="Badger J."/>
            <person name="Beckstrom-Sternberg S."/>
            <person name="Saqib M."/>
            <person name="Schutzer S.E."/>
            <person name="Keim P."/>
            <person name="Nierman W.C."/>
        </authorList>
    </citation>
    <scope>NUCLEOTIDE SEQUENCE [LARGE SCALE GENOMIC DNA]</scope>
    <source>
        <strain>1710b</strain>
    </source>
</reference>
<sequence length="553" mass="61042">MTKYVFVTGGVVSSLGKGIAAASLAAILESRGLKVTLLKLDPYINVDPGTMSPFQHGEVFVTEDGAETDLDLGHYERFISTKMRKANNFTTGQIYESVIRKERRGDYLGKTVQVIPHITNEIQAFIERGAASATCGEPDVAIVEIGGTVGDIESLPFLEAARQMSLRLGRNSACFVHLTLVPFIATAGELKTKPTQHSVQKLREIGISPHVLLCRADRPIPDDESKKISLFSNVPEDAVISVWDVDSIYKIPQMLHDQGLDRLICEELRLDPQPADLRMWAALVEKLQNPKHEVTIGMVGKYVDLTESYKSLIEALRHASIHTSTKVNIEYIDSEELETNGTASLAHLDAVLVPGGFGRRGTEGKIAAVRYAREAKVPYLGICLGMQLAVIEFARDVVGLKQANSTEFDPNTPERVVALITEWYDREGKVEKRTEDSDLGGTMRLGSQRCPIKPGTLAEAIYGKDVNERHRHRYEVNNRFVPQLEAGGLVISARTPSEDLPEMMELPSTMHPWFVGVQFHPEFTSTPRDGHPLFKSFVQAALACQQTRAGAKA</sequence>
<name>PYRG_BURP1</name>
<organism>
    <name type="scientific">Burkholderia pseudomallei (strain 1710b)</name>
    <dbReference type="NCBI Taxonomy" id="320372"/>
    <lineage>
        <taxon>Bacteria</taxon>
        <taxon>Pseudomonadati</taxon>
        <taxon>Pseudomonadota</taxon>
        <taxon>Betaproteobacteria</taxon>
        <taxon>Burkholderiales</taxon>
        <taxon>Burkholderiaceae</taxon>
        <taxon>Burkholderia</taxon>
        <taxon>pseudomallei group</taxon>
    </lineage>
</organism>
<keyword id="KW-0067">ATP-binding</keyword>
<keyword id="KW-0315">Glutamine amidotransferase</keyword>
<keyword id="KW-0436">Ligase</keyword>
<keyword id="KW-0460">Magnesium</keyword>
<keyword id="KW-0479">Metal-binding</keyword>
<keyword id="KW-0547">Nucleotide-binding</keyword>
<keyword id="KW-0665">Pyrimidine biosynthesis</keyword>
<accession>Q3JQQ4</accession>
<dbReference type="EC" id="6.3.4.2" evidence="1"/>
<dbReference type="EMBL" id="CP000124">
    <property type="protein sequence ID" value="ABA48739.1"/>
    <property type="molecule type" value="Genomic_DNA"/>
</dbReference>
<dbReference type="RefSeq" id="WP_004192790.1">
    <property type="nucleotide sequence ID" value="NC_007434.1"/>
</dbReference>
<dbReference type="SMR" id="Q3JQQ4"/>
<dbReference type="EnsemblBacteria" id="ABA48739">
    <property type="protein sequence ID" value="ABA48739"/>
    <property type="gene ID" value="BURPS1710b_2713"/>
</dbReference>
<dbReference type="KEGG" id="bpm:BURPS1710b_2713"/>
<dbReference type="HOGENOM" id="CLU_011675_5_0_4"/>
<dbReference type="UniPathway" id="UPA00159">
    <property type="reaction ID" value="UER00277"/>
</dbReference>
<dbReference type="Proteomes" id="UP000002700">
    <property type="component" value="Chromosome I"/>
</dbReference>
<dbReference type="GO" id="GO:0005829">
    <property type="term" value="C:cytosol"/>
    <property type="evidence" value="ECO:0007669"/>
    <property type="project" value="TreeGrafter"/>
</dbReference>
<dbReference type="GO" id="GO:0005524">
    <property type="term" value="F:ATP binding"/>
    <property type="evidence" value="ECO:0007669"/>
    <property type="project" value="UniProtKB-KW"/>
</dbReference>
<dbReference type="GO" id="GO:0003883">
    <property type="term" value="F:CTP synthase activity"/>
    <property type="evidence" value="ECO:0007669"/>
    <property type="project" value="UniProtKB-UniRule"/>
</dbReference>
<dbReference type="GO" id="GO:0004359">
    <property type="term" value="F:glutaminase activity"/>
    <property type="evidence" value="ECO:0007669"/>
    <property type="project" value="RHEA"/>
</dbReference>
<dbReference type="GO" id="GO:0042802">
    <property type="term" value="F:identical protein binding"/>
    <property type="evidence" value="ECO:0007669"/>
    <property type="project" value="TreeGrafter"/>
</dbReference>
<dbReference type="GO" id="GO:0046872">
    <property type="term" value="F:metal ion binding"/>
    <property type="evidence" value="ECO:0007669"/>
    <property type="project" value="UniProtKB-KW"/>
</dbReference>
<dbReference type="GO" id="GO:0044210">
    <property type="term" value="P:'de novo' CTP biosynthetic process"/>
    <property type="evidence" value="ECO:0007669"/>
    <property type="project" value="UniProtKB-UniRule"/>
</dbReference>
<dbReference type="GO" id="GO:0019856">
    <property type="term" value="P:pyrimidine nucleobase biosynthetic process"/>
    <property type="evidence" value="ECO:0007669"/>
    <property type="project" value="TreeGrafter"/>
</dbReference>
<dbReference type="CDD" id="cd03113">
    <property type="entry name" value="CTPS_N"/>
    <property type="match status" value="1"/>
</dbReference>
<dbReference type="CDD" id="cd01746">
    <property type="entry name" value="GATase1_CTP_Synthase"/>
    <property type="match status" value="1"/>
</dbReference>
<dbReference type="FunFam" id="3.40.50.300:FF:000009">
    <property type="entry name" value="CTP synthase"/>
    <property type="match status" value="1"/>
</dbReference>
<dbReference type="FunFam" id="3.40.50.880:FF:000002">
    <property type="entry name" value="CTP synthase"/>
    <property type="match status" value="1"/>
</dbReference>
<dbReference type="Gene3D" id="3.40.50.880">
    <property type="match status" value="1"/>
</dbReference>
<dbReference type="Gene3D" id="3.40.50.300">
    <property type="entry name" value="P-loop containing nucleotide triphosphate hydrolases"/>
    <property type="match status" value="1"/>
</dbReference>
<dbReference type="HAMAP" id="MF_01227">
    <property type="entry name" value="PyrG"/>
    <property type="match status" value="1"/>
</dbReference>
<dbReference type="InterPro" id="IPR029062">
    <property type="entry name" value="Class_I_gatase-like"/>
</dbReference>
<dbReference type="InterPro" id="IPR004468">
    <property type="entry name" value="CTP_synthase"/>
</dbReference>
<dbReference type="InterPro" id="IPR017456">
    <property type="entry name" value="CTP_synthase_N"/>
</dbReference>
<dbReference type="InterPro" id="IPR017926">
    <property type="entry name" value="GATASE"/>
</dbReference>
<dbReference type="InterPro" id="IPR033828">
    <property type="entry name" value="GATase1_CTP_Synthase"/>
</dbReference>
<dbReference type="InterPro" id="IPR027417">
    <property type="entry name" value="P-loop_NTPase"/>
</dbReference>
<dbReference type="NCBIfam" id="NF003792">
    <property type="entry name" value="PRK05380.1"/>
    <property type="match status" value="1"/>
</dbReference>
<dbReference type="NCBIfam" id="TIGR00337">
    <property type="entry name" value="PyrG"/>
    <property type="match status" value="1"/>
</dbReference>
<dbReference type="PANTHER" id="PTHR11550">
    <property type="entry name" value="CTP SYNTHASE"/>
    <property type="match status" value="1"/>
</dbReference>
<dbReference type="PANTHER" id="PTHR11550:SF0">
    <property type="entry name" value="CTP SYNTHASE-RELATED"/>
    <property type="match status" value="1"/>
</dbReference>
<dbReference type="Pfam" id="PF06418">
    <property type="entry name" value="CTP_synth_N"/>
    <property type="match status" value="1"/>
</dbReference>
<dbReference type="Pfam" id="PF00117">
    <property type="entry name" value="GATase"/>
    <property type="match status" value="1"/>
</dbReference>
<dbReference type="SUPFAM" id="SSF52317">
    <property type="entry name" value="Class I glutamine amidotransferase-like"/>
    <property type="match status" value="1"/>
</dbReference>
<dbReference type="SUPFAM" id="SSF52540">
    <property type="entry name" value="P-loop containing nucleoside triphosphate hydrolases"/>
    <property type="match status" value="1"/>
</dbReference>
<dbReference type="PROSITE" id="PS51273">
    <property type="entry name" value="GATASE_TYPE_1"/>
    <property type="match status" value="1"/>
</dbReference>
<protein>
    <recommendedName>
        <fullName evidence="1">CTP synthase</fullName>
        <ecNumber evidence="1">6.3.4.2</ecNumber>
    </recommendedName>
    <alternativeName>
        <fullName evidence="1">Cytidine 5'-triphosphate synthase</fullName>
    </alternativeName>
    <alternativeName>
        <fullName evidence="1">Cytidine triphosphate synthetase</fullName>
        <shortName evidence="1">CTP synthetase</shortName>
        <shortName evidence="1">CTPS</shortName>
    </alternativeName>
    <alternativeName>
        <fullName evidence="1">UTP--ammonia ligase</fullName>
    </alternativeName>
</protein>